<dbReference type="EC" id="1.1.1.421" evidence="1"/>
<dbReference type="EMBL" id="CP002879">
    <property type="protein sequence ID" value="AEI82560.1"/>
    <property type="molecule type" value="Genomic_DNA"/>
</dbReference>
<dbReference type="RefSeq" id="WP_013959592.1">
    <property type="nucleotide sequence ID" value="NC_015727.1"/>
</dbReference>
<dbReference type="PDB" id="5T57">
    <property type="method" value="X-ray"/>
    <property type="resolution" value="1.65 A"/>
    <property type="chains" value="A=1-276"/>
</dbReference>
<dbReference type="PDBsum" id="5T57"/>
<dbReference type="SMR" id="F8GV06"/>
<dbReference type="GeneID" id="34311806"/>
<dbReference type="KEGG" id="cnc:CNE_BB1p11570"/>
<dbReference type="HOGENOM" id="CLU_087850_0_0_4"/>
<dbReference type="BioCyc" id="MetaCyc:MONOMER-20970"/>
<dbReference type="BRENDA" id="1.1.1.421">
    <property type="organism ID" value="231"/>
</dbReference>
<dbReference type="SABIO-RK" id="F8GV06"/>
<dbReference type="Proteomes" id="UP000006798">
    <property type="component" value="Plasmid pBB1"/>
</dbReference>
<dbReference type="GO" id="GO:0046872">
    <property type="term" value="F:metal ion binding"/>
    <property type="evidence" value="ECO:0007669"/>
    <property type="project" value="UniProtKB-KW"/>
</dbReference>
<dbReference type="GO" id="GO:0070403">
    <property type="term" value="F:NAD+ binding"/>
    <property type="evidence" value="ECO:0007669"/>
    <property type="project" value="TreeGrafter"/>
</dbReference>
<dbReference type="GO" id="GO:0008977">
    <property type="term" value="F:prephenate dehydrogenase (NAD+) activity"/>
    <property type="evidence" value="ECO:0007669"/>
    <property type="project" value="TreeGrafter"/>
</dbReference>
<dbReference type="GO" id="GO:0006571">
    <property type="term" value="P:tyrosine biosynthetic process"/>
    <property type="evidence" value="ECO:0007669"/>
    <property type="project" value="TreeGrafter"/>
</dbReference>
<dbReference type="Gene3D" id="3.40.50.720">
    <property type="entry name" value="NAD(P)-binding Rossmann-like Domain"/>
    <property type="match status" value="1"/>
</dbReference>
<dbReference type="Gene3D" id="1.10.3640.10">
    <property type="entry name" value="Semialdehyde dehydrogenase-like, C-terminal"/>
    <property type="match status" value="1"/>
</dbReference>
<dbReference type="InterPro" id="IPR036291">
    <property type="entry name" value="NAD(P)-bd_dom_sf"/>
</dbReference>
<dbReference type="InterPro" id="IPR028939">
    <property type="entry name" value="P5C_Rdtase_cat_N"/>
</dbReference>
<dbReference type="InterPro" id="IPR031663">
    <property type="entry name" value="PGDH_C"/>
</dbReference>
<dbReference type="InterPro" id="IPR050812">
    <property type="entry name" value="Preph/Arog_dehydrog"/>
</dbReference>
<dbReference type="InterPro" id="IPR037161">
    <property type="entry name" value="Semialdehyde_DH-like_C"/>
</dbReference>
<dbReference type="PANTHER" id="PTHR21363">
    <property type="entry name" value="PREPHENATE DEHYDROGENASE"/>
    <property type="match status" value="1"/>
</dbReference>
<dbReference type="PANTHER" id="PTHR21363:SF0">
    <property type="entry name" value="PREPHENATE DEHYDROGENASE [NADP(+)]"/>
    <property type="match status" value="1"/>
</dbReference>
<dbReference type="Pfam" id="PF03807">
    <property type="entry name" value="F420_oxidored"/>
    <property type="match status" value="1"/>
</dbReference>
<dbReference type="Pfam" id="PF16896">
    <property type="entry name" value="PGDH_C"/>
    <property type="match status" value="1"/>
</dbReference>
<dbReference type="SUPFAM" id="SSF51735">
    <property type="entry name" value="NAD(P)-binding Rossmann-fold domains"/>
    <property type="match status" value="1"/>
</dbReference>
<evidence type="ECO:0000269" key="1">
    <source>
    </source>
</evidence>
<evidence type="ECO:0000269" key="2">
    <source ref="3"/>
</evidence>
<evidence type="ECO:0000303" key="3">
    <source>
    </source>
</evidence>
<evidence type="ECO:0000305" key="4"/>
<evidence type="ECO:0000305" key="5">
    <source ref="3"/>
</evidence>
<evidence type="ECO:0000312" key="6">
    <source>
        <dbReference type="EMBL" id="AEI82560.1"/>
    </source>
</evidence>
<evidence type="ECO:0007744" key="7">
    <source>
        <dbReference type="PDB" id="5T57"/>
    </source>
</evidence>
<evidence type="ECO:0007829" key="8">
    <source>
        <dbReference type="PDB" id="5T57"/>
    </source>
</evidence>
<sequence length="276" mass="30279">MKEKIALFGAGGKMGVRLAKNLLKSDYRVSHVEVSEVGKKRLKDELGLECVSTEAALDNVDVVILAVPDTIIGKIAAQIAPQLRPGTMVMTLDAAAPFAGHLPDRPDLTYFVAHPCHPLIFNDETDPEARRDYFGGGAAKQSITSALMQGPEEAFDLGEAVAKVIYAPILRSYRLTVDQMALLEPGLSETICATLLQVMREAMDETVRRGVPKEAARDFLLGHMNILGAVIFNEIPGAFSDACNKAIEFGKPRLMRDDWIKVFDREEIAESIRRIT</sequence>
<reference key="1">
    <citation type="journal article" date="2011" name="J. Bacteriol.">
        <title>Complete genome sequence of the type strain Cupriavidus necator N-1.</title>
        <authorList>
            <person name="Poehlein A."/>
            <person name="Kusian B."/>
            <person name="Friedrich B."/>
            <person name="Daniel R."/>
            <person name="Bowien B."/>
        </authorList>
    </citation>
    <scope>NUCLEOTIDE SEQUENCE [LARGE SCALE GENOMIC DNA]</scope>
    <source>
        <strain>ATCC 43291 / DSM 13513 / CCUG 52238 / LMG 8453 / N-1</strain>
    </source>
</reference>
<reference key="2">
    <citation type="journal article" date="2018" name="Nat. Chem. Biol.">
        <title>Functional assignment of multiple catabolic pathways for D-apiose.</title>
        <authorList>
            <person name="Carter M.S."/>
            <person name="Zhang X."/>
            <person name="Huang H."/>
            <person name="Bouvier J.T."/>
            <person name="Francisco B.S."/>
            <person name="Vetting M.W."/>
            <person name="Al-Obaidi N."/>
            <person name="Bonanno J.B."/>
            <person name="Ghosh A."/>
            <person name="Zallot R.G."/>
            <person name="Andersen H.M."/>
            <person name="Almo S.C."/>
            <person name="Gerlt J.A."/>
        </authorList>
    </citation>
    <scope>FUNCTION</scope>
    <scope>CATALYTIC ACTIVITY</scope>
    <scope>BIOPHYSICOCHEMICAL PROPERTIES</scope>
    <scope>PATHWAY</scope>
</reference>
<reference evidence="7" key="3">
    <citation type="submission" date="2016-08" db="PDB data bank">
        <title>Crystal structure of a semialdehyde dehydrogenase NAD-binding protein from Cupriavidus necator in complex with calcium and NAD.</title>
        <authorList>
            <person name="Cook W.J."/>
            <person name="Bonanno J.B."/>
            <person name="Fedorov E."/>
            <person name="Huang H."/>
            <person name="Gerlt J.A."/>
            <person name="Almo S.C."/>
        </authorList>
    </citation>
    <scope>X-RAY CRYSTALLOGRAPHY (1.65 ANGSTROMS) IN COMPLEX WITH NAD AND ZINC</scope>
    <scope>COFACTOR</scope>
</reference>
<protein>
    <recommendedName>
        <fullName evidence="3">D-apionate oxidoisomerase</fullName>
        <ecNumber evidence="1">1.1.1.421</ecNumber>
    </recommendedName>
</protein>
<accession>F8GV06</accession>
<feature type="chain" id="PRO_0000446031" description="D-apionate oxidoisomerase">
    <location>
        <begin position="1"/>
        <end position="276"/>
    </location>
</feature>
<feature type="binding site" evidence="2 7">
    <location>
        <begin position="12"/>
        <end position="14"/>
    </location>
    <ligand>
        <name>NAD(+)</name>
        <dbReference type="ChEBI" id="CHEBI:57540"/>
    </ligand>
</feature>
<feature type="binding site" evidence="2 7">
    <location>
        <position position="33"/>
    </location>
    <ligand>
        <name>NAD(+)</name>
        <dbReference type="ChEBI" id="CHEBI:57540"/>
    </ligand>
</feature>
<feature type="binding site" evidence="2 7">
    <location>
        <position position="69"/>
    </location>
    <ligand>
        <name>NAD(+)</name>
        <dbReference type="ChEBI" id="CHEBI:57540"/>
    </ligand>
</feature>
<feature type="binding site" evidence="2 7">
    <location>
        <position position="114"/>
    </location>
    <ligand>
        <name>Zn(2+)</name>
        <dbReference type="ChEBI" id="CHEBI:29105"/>
    </ligand>
</feature>
<feature type="binding site" evidence="2 7">
    <location>
        <position position="184"/>
    </location>
    <ligand>
        <name>Zn(2+)</name>
        <dbReference type="ChEBI" id="CHEBI:29105"/>
    </ligand>
</feature>
<feature type="strand" evidence="8">
    <location>
        <begin position="4"/>
        <end position="8"/>
    </location>
</feature>
<feature type="turn" evidence="8">
    <location>
        <begin position="9"/>
        <end position="11"/>
    </location>
</feature>
<feature type="helix" evidence="8">
    <location>
        <begin position="13"/>
        <end position="22"/>
    </location>
</feature>
<feature type="strand" evidence="8">
    <location>
        <begin position="28"/>
        <end position="32"/>
    </location>
</feature>
<feature type="helix" evidence="8">
    <location>
        <begin position="36"/>
        <end position="46"/>
    </location>
</feature>
<feature type="helix" evidence="8">
    <location>
        <begin position="53"/>
        <end position="57"/>
    </location>
</feature>
<feature type="strand" evidence="8">
    <location>
        <begin position="61"/>
        <end position="65"/>
    </location>
</feature>
<feature type="helix" evidence="8">
    <location>
        <begin position="69"/>
        <end position="71"/>
    </location>
</feature>
<feature type="helix" evidence="8">
    <location>
        <begin position="72"/>
        <end position="79"/>
    </location>
</feature>
<feature type="helix" evidence="8">
    <location>
        <begin position="80"/>
        <end position="82"/>
    </location>
</feature>
<feature type="strand" evidence="8">
    <location>
        <begin position="88"/>
        <end position="94"/>
    </location>
</feature>
<feature type="helix" evidence="8">
    <location>
        <begin position="95"/>
        <end position="98"/>
    </location>
</feature>
<feature type="strand" evidence="8">
    <location>
        <begin position="108"/>
        <end position="118"/>
    </location>
</feature>
<feature type="helix" evidence="8">
    <location>
        <begin position="127"/>
        <end position="130"/>
    </location>
</feature>
<feature type="strand" evidence="8">
    <location>
        <begin position="134"/>
        <end position="139"/>
    </location>
</feature>
<feature type="strand" evidence="8">
    <location>
        <begin position="141"/>
        <end position="150"/>
    </location>
</feature>
<feature type="helix" evidence="8">
    <location>
        <begin position="153"/>
        <end position="165"/>
    </location>
</feature>
<feature type="strand" evidence="8">
    <location>
        <begin position="168"/>
        <end position="174"/>
    </location>
</feature>
<feature type="helix" evidence="8">
    <location>
        <begin position="177"/>
        <end position="183"/>
    </location>
</feature>
<feature type="helix" evidence="8">
    <location>
        <begin position="184"/>
        <end position="191"/>
    </location>
</feature>
<feature type="helix" evidence="8">
    <location>
        <begin position="192"/>
        <end position="208"/>
    </location>
</feature>
<feature type="helix" evidence="8">
    <location>
        <begin position="213"/>
        <end position="231"/>
    </location>
</feature>
<feature type="helix" evidence="8">
    <location>
        <begin position="241"/>
        <end position="254"/>
    </location>
</feature>
<feature type="helix" evidence="8">
    <location>
        <begin position="259"/>
        <end position="263"/>
    </location>
</feature>
<feature type="helix" evidence="8">
    <location>
        <begin position="265"/>
        <end position="273"/>
    </location>
</feature>
<proteinExistence type="evidence at protein level"/>
<geneLocation type="plasmid" evidence="6">
    <name>pBB1</name>
</geneLocation>
<organism>
    <name type="scientific">Cupriavidus necator (strain ATCC 43291 / DSM 13513 / CCUG 52238 / LMG 8453 / N-1)</name>
    <name type="common">Ralstonia eutropha</name>
    <dbReference type="NCBI Taxonomy" id="1042878"/>
    <lineage>
        <taxon>Bacteria</taxon>
        <taxon>Pseudomonadati</taxon>
        <taxon>Pseudomonadota</taxon>
        <taxon>Betaproteobacteria</taxon>
        <taxon>Burkholderiales</taxon>
        <taxon>Burkholderiaceae</taxon>
        <taxon>Cupriavidus</taxon>
    </lineage>
</organism>
<gene>
    <name evidence="3" type="primary">apnO</name>
    <name evidence="6" type="ordered locus">CNE_BB1p11570</name>
</gene>
<name>APNO_CUPNN</name>
<keyword id="KW-0002">3D-structure</keyword>
<keyword id="KW-0119">Carbohydrate metabolism</keyword>
<keyword id="KW-0479">Metal-binding</keyword>
<keyword id="KW-0520">NAD</keyword>
<keyword id="KW-0547">Nucleotide-binding</keyword>
<keyword id="KW-0560">Oxidoreductase</keyword>
<keyword id="KW-0614">Plasmid</keyword>
<keyword id="KW-0862">Zinc</keyword>
<comment type="function">
    <text evidence="1">Involved in catabolism of D-apiose. Catalyzes the conversion of D-apionate to 3-oxo-isoapionate.</text>
</comment>
<comment type="catalytic activity">
    <reaction evidence="1">
        <text>D-apionate + NAD(+) = 3-oxoisoapionate + NADH + H(+)</text>
        <dbReference type="Rhea" id="RHEA:57044"/>
        <dbReference type="ChEBI" id="CHEBI:15378"/>
        <dbReference type="ChEBI" id="CHEBI:57540"/>
        <dbReference type="ChEBI" id="CHEBI:57945"/>
        <dbReference type="ChEBI" id="CHEBI:141352"/>
        <dbReference type="ChEBI" id="CHEBI:141353"/>
        <dbReference type="EC" id="1.1.1.421"/>
    </reaction>
</comment>
<comment type="cofactor">
    <cofactor evidence="5">
        <name>Zn(2+)</name>
        <dbReference type="ChEBI" id="CHEBI:29105"/>
    </cofactor>
</comment>
<comment type="biophysicochemical properties">
    <kinetics>
        <KM evidence="1">0.27 mM for D-apionate</KM>
        <text evidence="1">kcat is 0.49 sec(-1).</text>
    </kinetics>
</comment>
<comment type="pathway">
    <text evidence="1">Carbohydrate metabolism.</text>
</comment>
<comment type="similarity">
    <text evidence="4">Belongs to the ApnO family.</text>
</comment>